<name>L_HRSVA</name>
<keyword id="KW-0002">3D-structure</keyword>
<keyword id="KW-0067">ATP-binding</keyword>
<keyword id="KW-1035">Host cytoplasm</keyword>
<keyword id="KW-0378">Hydrolase</keyword>
<keyword id="KW-0460">Magnesium</keyword>
<keyword id="KW-0479">Metal-binding</keyword>
<keyword id="KW-0489">Methyltransferase</keyword>
<keyword id="KW-0506">mRNA capping</keyword>
<keyword id="KW-0507">mRNA processing</keyword>
<keyword id="KW-0511">Multifunctional enzyme</keyword>
<keyword id="KW-0547">Nucleotide-binding</keyword>
<keyword id="KW-0548">Nucleotidyltransferase</keyword>
<keyword id="KW-0696">RNA-directed RNA polymerase</keyword>
<keyword id="KW-0949">S-adenosyl-L-methionine</keyword>
<keyword id="KW-0808">Transferase</keyword>
<keyword id="KW-0693">Viral RNA replication</keyword>
<keyword id="KW-0946">Virion</keyword>
<evidence type="ECO:0000250" key="1">
    <source>
        <dbReference type="UniProtKB" id="P03523"/>
    </source>
</evidence>
<evidence type="ECO:0000250" key="2">
    <source>
        <dbReference type="UniProtKB" id="Q6WB93"/>
    </source>
</evidence>
<evidence type="ECO:0000255" key="3">
    <source>
        <dbReference type="PROSITE-ProRule" id="PRU00539"/>
    </source>
</evidence>
<evidence type="ECO:0000255" key="4">
    <source>
        <dbReference type="PROSITE-ProRule" id="PRU00923"/>
    </source>
</evidence>
<evidence type="ECO:0000269" key="5">
    <source>
    </source>
</evidence>
<evidence type="ECO:0000269" key="6">
    <source>
    </source>
</evidence>
<evidence type="ECO:0000269" key="7">
    <source>
    </source>
</evidence>
<evidence type="ECO:0000269" key="8">
    <source>
    </source>
</evidence>
<evidence type="ECO:0000269" key="9">
    <source>
    </source>
</evidence>
<evidence type="ECO:0000269" key="10">
    <source>
    </source>
</evidence>
<evidence type="ECO:0000269" key="11">
    <source>
    </source>
</evidence>
<evidence type="ECO:0000269" key="12">
    <source>
    </source>
</evidence>
<evidence type="ECO:0000269" key="13">
    <source>
    </source>
</evidence>
<evidence type="ECO:0000269" key="14">
    <source>
    </source>
</evidence>
<evidence type="ECO:0000269" key="15">
    <source>
    </source>
</evidence>
<evidence type="ECO:0000269" key="16">
    <source>
    </source>
</evidence>
<evidence type="ECO:0000269" key="17">
    <source>
    </source>
</evidence>
<evidence type="ECO:0000303" key="18">
    <source>
    </source>
</evidence>
<evidence type="ECO:0000303" key="19">
    <source>
    </source>
</evidence>
<evidence type="ECO:0000305" key="20"/>
<evidence type="ECO:0000305" key="21">
    <source>
    </source>
</evidence>
<evidence type="ECO:0000305" key="22">
    <source>
    </source>
</evidence>
<evidence type="ECO:0007744" key="23">
    <source>
        <dbReference type="PDB" id="6PZK"/>
    </source>
</evidence>
<evidence type="ECO:0007744" key="24">
    <source>
        <dbReference type="PDB" id="6UEN"/>
    </source>
</evidence>
<evidence type="ECO:0007829" key="25">
    <source>
        <dbReference type="PDB" id="6PZK"/>
    </source>
</evidence>
<evidence type="ECO:0007829" key="26">
    <source>
        <dbReference type="PDB" id="8FPI"/>
    </source>
</evidence>
<evidence type="ECO:0007829" key="27">
    <source>
        <dbReference type="PDB" id="8SNX"/>
    </source>
</evidence>
<evidence type="ECO:0007829" key="28">
    <source>
        <dbReference type="PDB" id="8SNY"/>
    </source>
</evidence>
<sequence>MDPIINGNSANVYLTDSYLKGVISFSECNALGSYIFNGPYLKNDYTNLISRQNPLIEHMNLKKLNITQSLISKYHKGEIKLEEPTYFQSLLMTYKSMTSSEQIATTNLLKKIIRRAIEISDVKVYAILNKLGLKEKDKIKSNNGQDEDNSVITTIIKDDILSAVKDNQSHLKADKNHSTKQKDTIKTTLLKKLMCSMQHPPSWLIHWFNLYTKLNNILTQYRSNEVKNHGFTLIDNQTLSGFQFILNQYGCIVYHKELKRITVTTYNQFLTWKDISLSRLNVCLITWISNCLNTLNKSLGLRCGFNNVILTQLFLYGDCILKLFHNEGFYIIKEVEGFIMSLILNITEEDQFRKRFYNSMLNNITDAANKAQKNLLSRVCHTLLDKTVSDNIINGRWIILLSKFLKLIKLAGDNNLNNLSELYFLFRIFGHPMVDERQAMDAVKINCNETKFYLLSSLSMLRGAFIYRIIKGFVNNYNRWPTLRNAIVLPLRWLTYYKLNTYPSLLELTERDLIVLSGLRFYREFRLPKKVDLEMIINDKAISPPKNLIWTSFPRNYMPSHIQNYIEHEKLKFSESDKSRRVLEYYLRDNKFNECDLYNCVVNQSYLNNPNHVVSLTGKERELSVGRMFAMQPGMFRQVQILAEKMIAENILQFFPESLTRYGDLELQKILELKAGISNKSNRYNDNYNNYISKCSIITDLSKFNQAFRYETSCICSDVLDELHGVQSLFSWLHLTIPHVTIICTYRHAPPYIGDHIVDLNNVDEQSGLYRYHMGGIEGWCQKLWTIEAISLLDLISLKGKFSITALINGDNQSIDISKPIRLMEGQTHAQADYLLALNSLKLLYKEYAGIGHKLKGTETYISRDMQFMSKTIQHNGVYYPASIKKVLRVGPWINTILDDFKVSLESIGSLTQELEYRGESLLCSLIFRNVWLYNQIALQLKNHALCNNKLYLDILKVLKHLKTFFNLDNIDTALTLYMNLPMLFGGGDPNLLYRSFYRRTPDFLTEAIVHSVFILSYYTNHDLKDKLQDLSDDRLNKFLTCIITFDKNPNAEFVTLMRDPQALGSERQAKITSEINRLAVTEVLSTAPNKIFSKSAQHYTTTEIDLNDIMQNIEPTYPHGLRVVYESLPFYKAEKIVNLISGTKSITNILEKTSAIDLTDIDRATEMMRKNITLLIRILPLDCNRDKREILSMENLSITELSKYVRERSWSLSNIVGVTSPSIMYTMDIKYTTSTISSGIIIEKYNVNSLTRGERGPTKPWVGSSTQEKKTMPVYNRQVLTKKQRDQIDLLAKLDWVYASIDNKDEFMEELSIGTLGLTYEKAKKLFPQYLSVNYLHRLTVSSRPCEFPASIPAYRTTNYHFDTSPINRILTEKYGDEDIDIVFQNCISFGLSLMSVVEQFTNVCPNRIILIPKLNEIHLMKPPIFTGDVDIHKLKQVIQKQHMFLPDKISLTQYVELFLSNKTLKSGSHVNSNLILAHKISDYFHNTYILSTNLAGHWILIIQLMKDSKGIFEKDWGEGYITDHMFINLKVFFNAYKTYLLCFHKGYGKAKLECDMNTSDLLCVLELIDSSYWKSMSKVFLEQKVIKYILSQDASLHRVKGCHSFKLWFLKRLNVAEFTVCPWVVNIDYHPTHMKAILTYIDLVRMGLINIDRIHIKNKHKFNDEFYTSNLFYINYNFSDNTHLLTKHIRIANSELENNYNKLYHPTPETLENILANPIKSNDKKTLNDYCIGKNVDSIMLPLLSNKKLIKSSAMIRTNYSKQDLYNLFPMVVIDRIIDHSGNTAKSNQLYTTTSHQISLVHNSTSLYCMLPWHHINRFNFVFSSTGCKISIEYILKDLKIKDPNCIAFIGEGAGNLLLRTVVELHPDIRYIYRSLKDCNDHSLPIEFLRLYNGHINIDYGENLTIPATDATNNIHWSYLHIKFAEPISLFVCDAELSVTVNWSKIIIEWSKHVRKCKYCSSVNKCMLIVKYHAQDDIDFKLDNITILKTYVCLGSKLKGSEVYLVLTIGPANIFPVFNVVQNAKLILSRTKNFIMPKKADKESIDANIKSLIPFLCYPITKKGINTALSKLKSVVSGDILSYSIAGRNEVFSNKLINHKHMNILKWFNHVLNFRSTELNYNHLYMVESTYPYLSELLNSLTTNELKKLIKITGSLLYNFHNE</sequence>
<accession>P28887</accession>
<accession>O41355</accession>
<accession>O41356</accession>
<accession>P90197</accession>
<accession>Q82021</accession>
<proteinExistence type="evidence at protein level"/>
<organismHost>
    <name type="scientific">Homo sapiens</name>
    <name type="common">Human</name>
    <dbReference type="NCBI Taxonomy" id="9606"/>
</organismHost>
<comment type="function">
    <text evidence="1 5 6 8 10 11 15 16 17 20 21">Responsible for RNA synthesis (replicase and transcriptase), cap addition, and cap methylation (PubMed:25010481, PubMed:31495574). Also performs the polyadenylation of subgenomic mRNAs by a stuttering mechanism at a slipery stop site present at the end of viral genes (PubMed:8794332). The template is composed of the viral RNA tightly encapsidated by the nucleoprotein (N) (Probable). The viral polymerase binds to the genomic RNA at two different sites in the 3' leader promoter thereby initiating either genome replication or mRNA transcription (PubMed:29873775). In the transcription mode, the polymerase performs the sequential transcription of all mRNAs using a termination-reinitiation mechanism responding to gene start and gene end signals (PubMed:8794332). Some polymerase disengage from the template at each gene junction, resulting in a decreasing abundance of transcripts from the 3' to the 5' end of the genome (Probable). The first gene is the most transcribed, and the last the least transcribed (Probable). Needs as cofactors the phosphoprotein for processivity and the M2-1 anti-termination protein (PubMed:31495574, PubMed:8552680). Polyribonucleotidyl transferase (PRNTase) adds the cap structure when the nascent RNA chain length has reached few nucleotides (PubMed:16189012, PubMed:8445369). Ribose 2'-O methylation of viral mRNA cap precedes and facilitates subsequent guanine-N-7 methylation (PubMed:33956914). In the replication mode, the polymerase replicates the whole viral genome without recognizing the gene end transcriptional signals (PubMed:15681446). The ability of the polymerase to override the gene end signals as it is producing the antigenome is probably due to replicative RNA becoming encapsidated with nucleoprotein as it is synthesized (PubMed:15681446).</text>
</comment>
<comment type="catalytic activity">
    <reaction evidence="3 8">
        <text>RNA(n) + a ribonucleoside 5'-triphosphate = RNA(n+1) + diphosphate</text>
        <dbReference type="Rhea" id="RHEA:21248"/>
        <dbReference type="Rhea" id="RHEA-COMP:14527"/>
        <dbReference type="Rhea" id="RHEA-COMP:17342"/>
        <dbReference type="ChEBI" id="CHEBI:33019"/>
        <dbReference type="ChEBI" id="CHEBI:61557"/>
        <dbReference type="ChEBI" id="CHEBI:140395"/>
        <dbReference type="EC" id="2.7.7.48"/>
    </reaction>
</comment>
<comment type="catalytic activity">
    <reaction evidence="18">
        <text>GTP + H2O = GDP + phosphate + H(+)</text>
        <dbReference type="Rhea" id="RHEA:19669"/>
        <dbReference type="ChEBI" id="CHEBI:15377"/>
        <dbReference type="ChEBI" id="CHEBI:15378"/>
        <dbReference type="ChEBI" id="CHEBI:37565"/>
        <dbReference type="ChEBI" id="CHEBI:43474"/>
        <dbReference type="ChEBI" id="CHEBI:58189"/>
    </reaction>
</comment>
<comment type="catalytic activity">
    <reaction evidence="6">
        <text>a 5'-end triphospho-adenylyl-adenylyl-cytidylyl-adenosine in mRNA + GDP + H(+) = a 5'-end (5'-triphosphoguanosine)-adenylyl-adenylyl-cytidylyl-adenosine in mRNA + diphosphate</text>
        <dbReference type="Rhea" id="RHEA:65436"/>
        <dbReference type="Rhea" id="RHEA-COMP:16797"/>
        <dbReference type="Rhea" id="RHEA-COMP:16799"/>
        <dbReference type="ChEBI" id="CHEBI:15378"/>
        <dbReference type="ChEBI" id="CHEBI:33019"/>
        <dbReference type="ChEBI" id="CHEBI:58189"/>
        <dbReference type="ChEBI" id="CHEBI:156484"/>
        <dbReference type="ChEBI" id="CHEBI:156503"/>
        <dbReference type="EC" id="2.7.7.88"/>
    </reaction>
</comment>
<comment type="catalytic activity">
    <reaction evidence="11 14">
        <text>a 5'-end (5'-triphosphoguanosine)-adenylyl-adenylyl-cytidylyl-adenosine in mRNA + 2 S-adenosyl-L-methionine = a 5'-end (N(7)-methyl 5'-triphosphoguanosine)-(2'-O-methyladenylyl)-adenylyl-cytidylyl-adenosine in mRNA + 2 S-adenosyl-L-homocysteine + H(+)</text>
        <dbReference type="Rhea" id="RHEA:65376"/>
        <dbReference type="Rhea" id="RHEA-COMP:16797"/>
        <dbReference type="Rhea" id="RHEA-COMP:16798"/>
        <dbReference type="ChEBI" id="CHEBI:15378"/>
        <dbReference type="ChEBI" id="CHEBI:57856"/>
        <dbReference type="ChEBI" id="CHEBI:59789"/>
        <dbReference type="ChEBI" id="CHEBI:156483"/>
        <dbReference type="ChEBI" id="CHEBI:156484"/>
        <dbReference type="EC" id="2.1.1.375"/>
    </reaction>
</comment>
<comment type="catalytic activity">
    <reaction evidence="14">
        <text>a 5'-end (5'-triphosphoguanosine)-adenylyl-adenylyl-cytidylyl-adenosine in mRNA + S-adenosyl-L-methionine = a 5'-end (5'-triphosphoguanosine)-(2'-O-methyladenylyl)-adenylyl-cytidylyl-adenosine in mRNA + S-adenosyl-L-homocysteine + H(+)</text>
        <dbReference type="Rhea" id="RHEA:65380"/>
        <dbReference type="Rhea" id="RHEA-COMP:16797"/>
        <dbReference type="Rhea" id="RHEA-COMP:16801"/>
        <dbReference type="ChEBI" id="CHEBI:15378"/>
        <dbReference type="ChEBI" id="CHEBI:57856"/>
        <dbReference type="ChEBI" id="CHEBI:59789"/>
        <dbReference type="ChEBI" id="CHEBI:156482"/>
        <dbReference type="ChEBI" id="CHEBI:156484"/>
    </reaction>
</comment>
<comment type="catalytic activity">
    <reaction evidence="14">
        <text>a 5'-end (5'-triphosphoguanosine)-(2'-O-methyladenylyl)-adenylyl-cytidylyl-adenosine in mRNA + S-adenosyl-L-methionine = a 5'-end (N(7)-methyl 5'-triphosphoguanosine)-(2'-O-methyladenylyl)-adenylyl-cytidylyl-adenosine in mRNA + S-adenosyl-L-homocysteine</text>
        <dbReference type="Rhea" id="RHEA:65440"/>
        <dbReference type="Rhea" id="RHEA-COMP:16798"/>
        <dbReference type="Rhea" id="RHEA-COMP:16801"/>
        <dbReference type="ChEBI" id="CHEBI:57856"/>
        <dbReference type="ChEBI" id="CHEBI:59789"/>
        <dbReference type="ChEBI" id="CHEBI:156482"/>
        <dbReference type="ChEBI" id="CHEBI:156483"/>
    </reaction>
</comment>
<comment type="cofactor">
    <cofactor evidence="8">
        <name>Mg(2+)</name>
        <dbReference type="ChEBI" id="CHEBI:18420"/>
    </cofactor>
    <text evidence="8">For RNA-directed RNA polymerase activity. Mn(2+) can stimulate de novo initiation but it is inefficient at supporting elongation of de novo initiated RNA.</text>
</comment>
<comment type="subunit">
    <text evidence="9 11 13">Interacts with the phosphoprotein (via C-terminus); the association of P and L forms the polymerase complex.</text>
</comment>
<comment type="subcellular location">
    <subcellularLocation>
        <location evidence="20">Virion</location>
    </subcellularLocation>
    <subcellularLocation>
        <location evidence="7">Host cytoplasm</location>
    </subcellularLocation>
    <text evidence="7">Localizes in cytoplasmic inclusion bodies.</text>
</comment>
<comment type="domain">
    <text evidence="11">Contains an RNA-dependent RNA polymerase (RdRp) domain, a polyribonucleotidyl transferase (PRNTase or capping) domain and a methyltransferase (MTase) domain.</text>
</comment>
<comment type="similarity">
    <text evidence="20">Belongs to the paramyxovirus L protein family.</text>
</comment>
<reference key="1">
    <citation type="journal article" date="1991" name="Virology">
        <title>Sequence analysis of the polymerase L gene of human respiratory syncytial virus and predicted phylogeny of nonsegmented negative-strand viruses.</title>
        <authorList>
            <person name="Stec D.S."/>
            <person name="Hill M.G. III"/>
            <person name="Collins P.L."/>
        </authorList>
    </citation>
    <scope>NUCLEOTIDE SEQUENCE [GENOMIC RNA]</scope>
</reference>
<reference key="2">
    <citation type="journal article" date="1995" name="J. Virol.">
        <title>Functional cDNA clones of the human respiratory syncytial (RS) virus N, P, and L proteins support replication of RS virus genomic RNA analogs and define minimal trans-acting requirements for RNA replication.</title>
        <authorList>
            <person name="Yu Q."/>
            <person name="Hardy R.W."/>
            <person name="Wertz G.W."/>
        </authorList>
    </citation>
    <scope>NUCLEOTIDE SEQUENCE [GENOMIC RNA]</scope>
</reference>
<reference key="3">
    <citation type="journal article" date="1995" name="Virology">
        <title>A cold-passaged, attenuated strain of human respiratory syncytial virus contains mutations in the F and L genes.</title>
        <authorList>
            <person name="Connors M."/>
            <person name="Crowe J.E. Jr."/>
            <person name="Firestone C.Y."/>
            <person name="Murphy B.R."/>
            <person name="Collins P.L."/>
        </authorList>
    </citation>
    <scope>NUCLEOTIDE SEQUENCE [GENOMIC RNA]</scope>
    <source>
        <strain>Cold-passage attenuated</strain>
    </source>
</reference>
<reference key="4">
    <citation type="journal article" date="1996" name="Virus Genes">
        <title>Acquisition of the ts phenotype by a chemically mutagenized cold-passaged human respiratory syncytial virus vaccine candidate results from the acquisition of a single mutation in the polymerase (L) gene.</title>
        <authorList>
            <person name="Crowe J.E. Jr."/>
            <person name="Firestone C.Y."/>
            <person name="Whitehead S.S."/>
            <person name="Collins P.L."/>
            <person name="Murphy B.R."/>
        </authorList>
    </citation>
    <scope>NUCLEOTIDE SEQUENCE [GENOMIC RNA]</scope>
    <source>
        <strain>Cold-passage attenuated</strain>
    </source>
</reference>
<reference key="5">
    <citation type="journal article" date="1996" name="Virology">
        <title>Nucleotide sequence analysis of the respiratory syncytial virus subgroup A cold-passaged (cp) temperature sensitive (ts) cpts-248/404 live attenuated virus vaccine candidate.</title>
        <authorList>
            <person name="Firestone C.Y."/>
            <person name="Whitehead S.S."/>
            <person name="Collins P.L."/>
            <person name="Murphy B.R."/>
            <person name="Crowe J.E. Jr."/>
        </authorList>
    </citation>
    <scope>NUCLEOTIDE SEQUENCE [GENOMIC RNA]</scope>
    <source>
        <strain>Cold-passage attenuated</strain>
    </source>
</reference>
<reference key="6">
    <citation type="journal article" date="1998" name="J. Virol.">
        <title>Recombinant respiratory syncytial virus (RSV) bearing a set of mutations from cold-passaged RSV is attenuated in chimpanzees.</title>
        <authorList>
            <person name="Whitehead S.S."/>
            <person name="Juhasz K."/>
            <person name="Firestone C.Y."/>
            <person name="Collins P.L."/>
            <person name="Murphy B.R."/>
        </authorList>
    </citation>
    <scope>NUCLEOTIDE SEQUENCE [GENOMIC RNA]</scope>
    <source>
        <strain>Cold-passage attenuated</strain>
    </source>
</reference>
<reference key="7">
    <citation type="journal article" date="1992" name="J. Virol.">
        <title>Transcription of human respiratory syncytial virus genome RNA in vitro: requirement of cellular factor(s).</title>
        <authorList>
            <person name="Barik S."/>
        </authorList>
    </citation>
    <scope>FUNCTION</scope>
</reference>
<reference key="8">
    <citation type="journal article" date="1993" name="J. Gen. Virol.">
        <title>The structure of the 5' terminal cap of the respiratory syncytial virus mRNA.</title>
        <authorList>
            <person name="Barik S."/>
        </authorList>
    </citation>
    <scope>FUNCTION</scope>
</reference>
<reference key="9">
    <citation type="journal article" date="1996" name="Proc. Natl. Acad. Sci. U.S.A.">
        <title>Transcription elongation factor of respiratory syncytial virus, a nonsegmented negative-strand RNA virus.</title>
        <authorList>
            <person name="Collins P.L."/>
            <person name="Hill M.G."/>
            <person name="Cristina J."/>
            <person name="Grosfeld H."/>
        </authorList>
    </citation>
    <scope>FUNCTION</scope>
</reference>
<reference key="10">
    <citation type="journal article" date="1996" name="J. Virol.">
        <title>Effects of mutations in the gene-start and gene-end sequence motifs on transcription of monocistronic and dicistronic minigenomes of respiratory syncytial virus.</title>
        <authorList>
            <person name="Kuo L."/>
            <person name="Grosfeld H."/>
            <person name="Cristina J."/>
            <person name="Hill M.G."/>
            <person name="Collins P.L."/>
        </authorList>
    </citation>
    <scope>FUNCTION</scope>
</reference>
<reference key="11">
    <citation type="journal article" date="2005" name="J. Virol.">
        <title>Inhibitors of respiratory syncytial virus replication target cotranscriptional mRNA guanylylation by viral RNA-dependent RNA polymerase.</title>
        <authorList>
            <person name="Liuzzi M."/>
            <person name="Mason S.W."/>
            <person name="Cartier M."/>
            <person name="Lawetz C."/>
            <person name="McCollum R.S."/>
            <person name="Dansereau N."/>
            <person name="Bolger G."/>
            <person name="Lapeyre N."/>
            <person name="Gaudette Y."/>
            <person name="Lagace L."/>
            <person name="Massariol M.J."/>
            <person name="Do F."/>
            <person name="Whitehead P."/>
            <person name="Lamarre L."/>
            <person name="Scouten E."/>
            <person name="Bordeleau J."/>
            <person name="Landry S."/>
            <person name="Rancourt J."/>
            <person name="Fazal G."/>
            <person name="Simoneau B."/>
        </authorList>
    </citation>
    <scope>CATALYTIC ACTIVITY</scope>
    <scope>FUNCTION</scope>
</reference>
<reference key="12">
    <citation type="journal article" date="2005" name="J. Virol.">
        <title>Identification of internal sequences in the 3' leader region of human respiratory syncytial virus that enhance transcription and confer replication processivity.</title>
        <authorList>
            <person name="McGivern D.R."/>
            <person name="Collins P.L."/>
            <person name="Fearns R."/>
        </authorList>
    </citation>
    <scope>FUNCTION</scope>
</reference>
<reference key="13">
    <citation type="journal article" date="2006" name="J. Gen. Virol.">
        <title>Unravelling the complexities of respiratory syncytial virus RNA synthesis.</title>
        <authorList>
            <person name="Cowton V.M."/>
            <person name="McGivern D.R."/>
            <person name="Fearns R."/>
        </authorList>
    </citation>
    <scope>REVIEW</scope>
</reference>
<reference key="14">
    <citation type="journal article" date="2007" name="Arch. Virol.">
        <title>Intracellular localization of human respiratory syncytial virus L protein.</title>
        <authorList>
            <person name="Carromeu C."/>
            <person name="Simabuco F.M."/>
            <person name="Tamura R.E."/>
            <person name="Farinha Arcieri L.E."/>
            <person name="Ventura A.M."/>
        </authorList>
    </citation>
    <scope>SUBCELLULAR LOCATION</scope>
</reference>
<reference key="15">
    <citation type="journal article" date="2014" name="Virology">
        <title>Factors affecting de novo RNA synthesis and back-priming by the respiratory syncytial virus polymerase.</title>
        <authorList>
            <person name="Noton S.L."/>
            <person name="Aljabr W."/>
            <person name="Hiscox J.A."/>
            <person name="Matthews D.A."/>
            <person name="Fearns R."/>
        </authorList>
    </citation>
    <scope>CATALYTIC ACTIVITY</scope>
    <scope>COFACTOR</scope>
    <scope>MUTAGENESIS OF ASN-812</scope>
    <scope>FUNCTION</scope>
</reference>
<reference key="16">
    <citation type="journal article" date="2015" name="J. Virol.">
        <title>Fine mapping and characterization of the L-polymerase-binding domain of the respiratory syncytial virus phosphoprotein.</title>
        <authorList>
            <person name="Sourimant J."/>
            <person name="Rameix-Welti M.A."/>
            <person name="Gaillard A.L."/>
            <person name="Chevret D."/>
            <person name="Galloux M."/>
            <person name="Gault E."/>
            <person name="Eleouet J.F."/>
        </authorList>
    </citation>
    <scope>INTERACTION WITH THE PHOSPHOPROTEIN</scope>
</reference>
<reference key="17">
    <citation type="journal article" date="2017" name="Virus Res.">
        <title>Polymerases of paramyxoviruses and pneumoviruses.</title>
        <authorList>
            <person name="Fearns R."/>
            <person name="Plemper R.K."/>
        </authorList>
    </citation>
    <scope>REVIEW</scope>
</reference>
<reference key="18">
    <citation type="journal article" date="2018" name="Nucleic Acids Res.">
        <title>Mechanism for de novo initiation at two sites in the respiratory syncytial virus promoter.</title>
        <authorList>
            <person name="Cressey T.N."/>
            <person name="Noton S.L."/>
            <person name="Nagendra K."/>
            <person name="Braun M.R."/>
            <person name="Fearns R."/>
        </authorList>
    </citation>
    <scope>FUNCTION</scope>
</reference>
<reference key="19">
    <citation type="journal article" date="2020" name="Nature">
        <title>Structure of the human metapneumovirus polymerase phosphoprotein complex.</title>
        <authorList>
            <person name="Pan J."/>
            <person name="Qian X."/>
            <person name="Lattmann S."/>
            <person name="El Sahili A."/>
            <person name="Yeo T.H."/>
            <person name="Jia H."/>
            <person name="Cressey T."/>
            <person name="Ludeke B."/>
            <person name="Noton S."/>
            <person name="Kalocsay M."/>
            <person name="Fearns R."/>
            <person name="Lescar J."/>
        </authorList>
    </citation>
    <scope>MUTAGENESIS OF PRO-1261; TRP-1262; PRO-1274 AND TYR-1276</scope>
</reference>
<reference key="20">
    <citation type="journal article" date="2021" name="PLoS Pathog.">
        <title>The methyltransferase domain of the Respiratory Syncytial Virus L protein catalyzes cap N7 and 2'-O-methylation.</title>
        <authorList>
            <person name="Sutto-Ortiz P."/>
            <person name="Tcherniuk S."/>
            <person name="Ysebaert N."/>
            <person name="Abeywickrema P."/>
            <person name="Noel M."/>
            <person name="Decombe A."/>
            <person name="Debart F."/>
            <person name="Vasseur J.J."/>
            <person name="Canard B."/>
            <person name="Roymans D."/>
            <person name="Rigaux P."/>
            <person name="Eleouet J.F."/>
            <person name="Decroly E."/>
        </authorList>
    </citation>
    <scope>FUNCTION</scope>
    <scope>CATALYTIC ACTIVITY</scope>
    <scope>MUTAGENESIS OF ARG-1820; GLY-1855; ASP-1936; GLU-1938; SER-1998 AND GLU-2004</scope>
</reference>
<reference evidence="23" key="21">
    <citation type="journal article" date="2019" name="Cell">
        <title>Structure of the Respiratory Syncytial Virus Polymerase Complex.</title>
        <authorList>
            <person name="Gilman M.S.A."/>
            <person name="Liu C."/>
            <person name="Fung A."/>
            <person name="Behera I."/>
            <person name="Jordan P."/>
            <person name="Rigaux P."/>
            <person name="Ysebaert N."/>
            <person name="Tcherniuk S."/>
            <person name="Sourimant J."/>
            <person name="Eleouet J.F."/>
            <person name="Sutto-Ortiz P."/>
            <person name="Decroly E."/>
            <person name="Roymans D."/>
            <person name="Jin Z."/>
            <person name="McLellan J.S."/>
        </authorList>
    </citation>
    <scope>STRUCTURE BY ELECTRON MICROSCOPY (3.20 ANGSTROMS)</scope>
    <scope>INTERACTION WITH THE PHOSPHOPROTEIN</scope>
    <scope>CATALYTIC ACTIVITY</scope>
    <scope>FUNCTION</scope>
    <scope>DOMAIN</scope>
</reference>
<reference evidence="24" key="22">
    <citation type="journal article" date="2020" name="Nat. Commun.">
        <title>Cryo-EM structure of the respiratory syncytial virus RNA polymerase.</title>
        <authorList>
            <person name="Cao D."/>
            <person name="Gao Y."/>
            <person name="Roesler C."/>
            <person name="Rice S."/>
            <person name="D'Cunha P."/>
            <person name="Zhuang L."/>
            <person name="Slack J."/>
            <person name="Domke M."/>
            <person name="Antonova A."/>
            <person name="Romanelli S."/>
            <person name="Keating S."/>
            <person name="Forero G."/>
            <person name="Juneja P."/>
            <person name="Liang B."/>
        </authorList>
    </citation>
    <scope>STRUCTURE BY ELECTRON MICROSCOPY (3.67 ANGSTROMS) OF 1-1500</scope>
    <scope>INTERACTION WITH THE PHOSPHOPROTEIN</scope>
    <scope>MUTAGENESIS OF ASP-811</scope>
    <scope>CATALYTIC ACTIVITY</scope>
</reference>
<protein>
    <recommendedName>
        <fullName>RNA-directed RNA polymerase L</fullName>
        <shortName>Protein L</shortName>
    </recommendedName>
    <alternativeName>
        <fullName>Large structural protein</fullName>
    </alternativeName>
    <alternativeName>
        <fullName>Replicase</fullName>
    </alternativeName>
    <alternativeName>
        <fullName>Transcriptase</fullName>
    </alternativeName>
    <domain>
        <recommendedName>
            <fullName>RNA-directed RNA polymerase</fullName>
            <ecNumber evidence="8 13">2.7.7.48</ecNumber>
        </recommendedName>
    </domain>
    <domain>
        <recommendedName>
            <fullName evidence="18">GTP phosphohydrolase</fullName>
            <ecNumber evidence="18">3.6.1.-</ecNumber>
        </recommendedName>
    </domain>
    <domain>
        <recommendedName>
            <fullName evidence="20">GDP polyribonucleotidyltransferase</fullName>
            <ecNumber evidence="6 18">2.7.7.88</ecNumber>
        </recommendedName>
        <alternativeName>
            <fullName evidence="20">PRNTase</fullName>
        </alternativeName>
    </domain>
    <domain>
        <recommendedName>
            <fullName evidence="20">mRNA cap methyltransferase</fullName>
            <ecNumber evidence="1">2.1.1.375</ecNumber>
        </recommendedName>
        <alternativeName>
            <fullName evidence="1">mRNA (guanine-N(7)-)-methyltransferase</fullName>
            <shortName evidence="1">G-N7-MTase</shortName>
        </alternativeName>
        <alternativeName>
            <fullName evidence="1">mRNA (nucleoside-2'-O-)-methyltransferase</fullName>
            <shortName evidence="1">N1-2'-O-MTase</shortName>
        </alternativeName>
    </domain>
</protein>
<organism>
    <name type="scientific">Human respiratory syncytial virus A (strain A2)</name>
    <dbReference type="NCBI Taxonomy" id="11259"/>
    <lineage>
        <taxon>Viruses</taxon>
        <taxon>Riboviria</taxon>
        <taxon>Orthornavirae</taxon>
        <taxon>Negarnaviricota</taxon>
        <taxon>Haploviricotina</taxon>
        <taxon>Monjiviricetes</taxon>
        <taxon>Mononegavirales</taxon>
        <taxon>Pneumoviridae</taxon>
        <taxon>Orthopneumovirus</taxon>
        <taxon>Orthopneumovirus hominis</taxon>
    </lineage>
</organism>
<feature type="chain" id="PRO_0000142727" description="RNA-directed RNA polymerase L">
    <location>
        <begin position="1"/>
        <end position="2165"/>
    </location>
</feature>
<feature type="domain" description="RdRp catalytic" evidence="3">
    <location>
        <begin position="693"/>
        <end position="877"/>
    </location>
</feature>
<feature type="domain" description="Mononegavirus-type SAM-dependent 2'-O-MTase" evidence="4">
    <location>
        <begin position="1820"/>
        <end position="2008"/>
    </location>
</feature>
<feature type="region of interest" description="GDP polyribonucleotidyltransferase" evidence="11">
    <location>
        <begin position="968"/>
        <end position="1460"/>
    </location>
</feature>
<feature type="active site" description="Nucleophile; for GDP polyribonucleotidyltransferase activity" evidence="1">
    <location>
        <position position="1338"/>
    </location>
</feature>
<feature type="active site" description="For mRNA (nucleoside-2'-O-)-methyltransferase activity" evidence="2">
    <location>
        <position position="1831"/>
    </location>
</feature>
<feature type="active site" description="For mRNA (nucleoside-2'-O-)-methyltransferase activity" evidence="2">
    <location>
        <position position="1936"/>
    </location>
</feature>
<feature type="active site" description="For mRNA (nucleoside-2'-O-)-methyltransferase activity" evidence="2">
    <location>
        <position position="1973"/>
    </location>
</feature>
<feature type="active site" description="For mRNA (nucleoside-2'-O-)-methyltransferase activity" evidence="2">
    <location>
        <position position="2004"/>
    </location>
</feature>
<feature type="binding site" evidence="19">
    <location>
        <position position="700"/>
    </location>
    <ligand>
        <name>Mg(2+)</name>
        <dbReference type="ChEBI" id="CHEBI:18420"/>
        <note>catalytic; for RNA-directed RNA polymerase activity</note>
    </ligand>
</feature>
<feature type="binding site" evidence="22">
    <location>
        <position position="811"/>
    </location>
    <ligand>
        <name>Mg(2+)</name>
        <dbReference type="ChEBI" id="CHEBI:18420"/>
        <note>catalytic; for RNA-directed RNA polymerase activity</note>
    </ligand>
</feature>
<feature type="binding site" evidence="2">
    <location>
        <begin position="1853"/>
        <end position="1857"/>
    </location>
    <ligand>
        <name>substrate</name>
        <note>for mRNA (nucleoside-2'-O-)-methyltransferase activity</note>
    </ligand>
</feature>
<feature type="sequence variant">
    <original>S</original>
    <variation>G</variation>
    <location>
        <position position="17"/>
    </location>
</feature>
<feature type="sequence variant" description="In strain: Cold-passage attenuated.">
    <original>C</original>
    <variation>Y</variation>
    <location>
        <position position="319"/>
    </location>
</feature>
<feature type="sequence variant">
    <original>Q</original>
    <variation>L</variation>
    <location>
        <position position="831"/>
    </location>
</feature>
<feature type="sequence variant">
    <original>N</original>
    <variation>D</variation>
    <location>
        <position position="1049"/>
    </location>
</feature>
<feature type="sequence variant">
    <original>D</original>
    <variation>E</variation>
    <location>
        <position position="1183"/>
    </location>
</feature>
<feature type="sequence variant" description="In strain: Cold-passage attenuated.">
    <original>H</original>
    <variation>Y</variation>
    <location>
        <position position="1690"/>
    </location>
</feature>
<feature type="mutagenesis site" description="Complete loss of RNA synthesis." evidence="13">
    <original>D</original>
    <variation>A</variation>
    <location>
        <position position="811"/>
    </location>
</feature>
<feature type="mutagenesis site" description="Complete loss of RNA synthesis." evidence="8">
    <original>N</original>
    <variation>A</variation>
    <location>
        <position position="812"/>
    </location>
</feature>
<feature type="mutagenesis site" description="Inhibition of RNA synthesis." evidence="12">
    <original>P</original>
    <variation>A</variation>
    <location>
        <position position="1261"/>
    </location>
</feature>
<feature type="mutagenesis site" description="Inhibition of RNA synthesis." evidence="12">
    <original>W</original>
    <variation>A</variation>
    <location>
        <position position="1262"/>
    </location>
</feature>
<feature type="mutagenesis site" description="No effect on RNA synthesis.">
    <original>P</original>
    <variation>A</variation>
    <location>
        <position position="1274"/>
    </location>
</feature>
<feature type="mutagenesis site" description="No effect on RNA synthesis.">
    <original>Y</original>
    <variation>A</variation>
    <location>
        <position position="1276"/>
    </location>
</feature>
<feature type="mutagenesis site" description="Complete loss of methyltransferase activity." evidence="14">
    <original>R</original>
    <variation>A</variation>
    <location>
        <position position="1820"/>
    </location>
</feature>
<feature type="mutagenesis site" description="Complete loss of methyltransferase activity." evidence="14">
    <original>G</original>
    <variation>S</variation>
    <location>
        <position position="1855"/>
    </location>
</feature>
<feature type="mutagenesis site" description="About 90% loss of methyltransferase activity." evidence="14">
    <original>D</original>
    <variation>A</variation>
    <location>
        <position position="1936"/>
    </location>
</feature>
<feature type="mutagenesis site" description="Complete loss of methyltransferase activity." evidence="14">
    <original>E</original>
    <variation>A</variation>
    <location>
        <position position="1938"/>
    </location>
</feature>
<feature type="mutagenesis site" description="Complete loss of methyltransferase activity." evidence="14">
    <original>S</original>
    <variation>A</variation>
    <location>
        <position position="1998"/>
    </location>
</feature>
<feature type="mutagenesis site" description="Complete loss of methyltransferase activity." evidence="14">
    <original>E</original>
    <variation>A</variation>
    <location>
        <position position="2004"/>
    </location>
</feature>
<feature type="helix" evidence="26">
    <location>
        <begin position="25"/>
        <end position="36"/>
    </location>
</feature>
<feature type="helix" evidence="26">
    <location>
        <begin position="45"/>
        <end position="47"/>
    </location>
</feature>
<feature type="helix" evidence="26">
    <location>
        <begin position="49"/>
        <end position="52"/>
    </location>
</feature>
<feature type="helix" evidence="26">
    <location>
        <begin position="56"/>
        <end position="63"/>
    </location>
</feature>
<feature type="helix" evidence="26">
    <location>
        <begin position="65"/>
        <end position="75"/>
    </location>
</feature>
<feature type="strand" evidence="26">
    <location>
        <begin position="79"/>
        <end position="81"/>
    </location>
</feature>
<feature type="helix" evidence="26">
    <location>
        <begin position="84"/>
        <end position="92"/>
    </location>
</feature>
<feature type="strand" evidence="26">
    <location>
        <begin position="99"/>
        <end position="103"/>
    </location>
</feature>
<feature type="helix" evidence="26">
    <location>
        <begin position="106"/>
        <end position="131"/>
    </location>
</feature>
<feature type="helix" evidence="26">
    <location>
        <begin position="188"/>
        <end position="196"/>
    </location>
</feature>
<feature type="strand" evidence="26">
    <location>
        <begin position="197"/>
        <end position="199"/>
    </location>
</feature>
<feature type="helix" evidence="26">
    <location>
        <begin position="202"/>
        <end position="227"/>
    </location>
</feature>
<feature type="strand" evidence="27">
    <location>
        <begin position="228"/>
        <end position="230"/>
    </location>
</feature>
<feature type="strand" evidence="26">
    <location>
        <begin position="233"/>
        <end position="239"/>
    </location>
</feature>
<feature type="strand" evidence="26">
    <location>
        <begin position="242"/>
        <end position="247"/>
    </location>
</feature>
<feature type="strand" evidence="26">
    <location>
        <begin position="250"/>
        <end position="255"/>
    </location>
</feature>
<feature type="turn" evidence="26">
    <location>
        <begin position="256"/>
        <end position="259"/>
    </location>
</feature>
<feature type="strand" evidence="26">
    <location>
        <begin position="260"/>
        <end position="264"/>
    </location>
</feature>
<feature type="helix" evidence="26">
    <location>
        <begin position="266"/>
        <end position="295"/>
    </location>
</feature>
<feature type="turn" evidence="26">
    <location>
        <begin position="297"/>
        <end position="299"/>
    </location>
</feature>
<feature type="helix" evidence="26">
    <location>
        <begin position="307"/>
        <end position="323"/>
    </location>
</feature>
<feature type="helix" evidence="27">
    <location>
        <begin position="325"/>
        <end position="327"/>
    </location>
</feature>
<feature type="helix" evidence="26">
    <location>
        <begin position="328"/>
        <end position="333"/>
    </location>
</feature>
<feature type="helix" evidence="26">
    <location>
        <begin position="335"/>
        <end position="347"/>
    </location>
</feature>
<feature type="helix" evidence="26">
    <location>
        <begin position="350"/>
        <end position="378"/>
    </location>
</feature>
<feature type="helix" evidence="26">
    <location>
        <begin position="379"/>
        <end position="381"/>
    </location>
</feature>
<feature type="helix" evidence="26">
    <location>
        <begin position="385"/>
        <end position="387"/>
    </location>
</feature>
<feature type="helix" evidence="26">
    <location>
        <begin position="390"/>
        <end position="393"/>
    </location>
</feature>
<feature type="helix" evidence="26">
    <location>
        <begin position="397"/>
        <end position="412"/>
    </location>
</feature>
<feature type="helix" evidence="26">
    <location>
        <begin position="416"/>
        <end position="421"/>
    </location>
</feature>
<feature type="helix" evidence="26">
    <location>
        <begin position="422"/>
        <end position="427"/>
    </location>
</feature>
<feature type="helix" evidence="26">
    <location>
        <begin position="436"/>
        <end position="448"/>
    </location>
</feature>
<feature type="strand" evidence="26">
    <location>
        <begin position="452"/>
        <end position="454"/>
    </location>
</feature>
<feature type="helix" evidence="26">
    <location>
        <begin position="455"/>
        <end position="476"/>
    </location>
</feature>
<feature type="strand" evidence="26">
    <location>
        <begin position="477"/>
        <end position="479"/>
    </location>
</feature>
<feature type="helix" evidence="26">
    <location>
        <begin position="486"/>
        <end position="488"/>
    </location>
</feature>
<feature type="helix" evidence="26">
    <location>
        <begin position="491"/>
        <end position="498"/>
    </location>
</feature>
<feature type="turn" evidence="26">
    <location>
        <begin position="505"/>
        <end position="507"/>
    </location>
</feature>
<feature type="helix" evidence="26">
    <location>
        <begin position="510"/>
        <end position="516"/>
    </location>
</feature>
<feature type="helix" evidence="26">
    <location>
        <begin position="533"/>
        <end position="536"/>
    </location>
</feature>
<feature type="strand" evidence="26">
    <location>
        <begin position="539"/>
        <end position="541"/>
    </location>
</feature>
<feature type="helix" evidence="26">
    <location>
        <begin position="546"/>
        <end position="552"/>
    </location>
</feature>
<feature type="turn" evidence="26">
    <location>
        <begin position="555"/>
        <end position="557"/>
    </location>
</feature>
<feature type="helix" evidence="26">
    <location>
        <begin position="560"/>
        <end position="569"/>
    </location>
</feature>
<feature type="helix" evidence="26">
    <location>
        <begin position="570"/>
        <end position="572"/>
    </location>
</feature>
<feature type="turn" evidence="26">
    <location>
        <begin position="575"/>
        <end position="578"/>
    </location>
</feature>
<feature type="strand" evidence="28">
    <location>
        <begin position="579"/>
        <end position="581"/>
    </location>
</feature>
<feature type="helix" evidence="26">
    <location>
        <begin position="582"/>
        <end position="587"/>
    </location>
</feature>
<feature type="helix" evidence="26">
    <location>
        <begin position="596"/>
        <end position="603"/>
    </location>
</feature>
<feature type="turn" evidence="26">
    <location>
        <begin position="604"/>
        <end position="606"/>
    </location>
</feature>
<feature type="strand" evidence="26">
    <location>
        <begin position="614"/>
        <end position="616"/>
    </location>
</feature>
<feature type="strand" evidence="25">
    <location>
        <begin position="629"/>
        <end position="631"/>
    </location>
</feature>
<feature type="helix" evidence="26">
    <location>
        <begin position="634"/>
        <end position="650"/>
    </location>
</feature>
<feature type="helix" evidence="26">
    <location>
        <begin position="652"/>
        <end position="654"/>
    </location>
</feature>
<feature type="helix" evidence="28">
    <location>
        <begin position="656"/>
        <end position="658"/>
    </location>
</feature>
<feature type="helix" evidence="27">
    <location>
        <begin position="667"/>
        <end position="673"/>
    </location>
</feature>
<feature type="strand" evidence="26">
    <location>
        <begin position="692"/>
        <end position="699"/>
    </location>
</feature>
<feature type="helix" evidence="26">
    <location>
        <begin position="704"/>
        <end position="707"/>
    </location>
</feature>
<feature type="helix" evidence="26">
    <location>
        <begin position="710"/>
        <end position="713"/>
    </location>
</feature>
<feature type="turn" evidence="26">
    <location>
        <begin position="714"/>
        <end position="716"/>
    </location>
</feature>
<feature type="helix" evidence="26">
    <location>
        <begin position="717"/>
        <end position="723"/>
    </location>
</feature>
<feature type="strand" evidence="26">
    <location>
        <begin position="727"/>
        <end position="729"/>
    </location>
</feature>
<feature type="helix" evidence="26">
    <location>
        <begin position="732"/>
        <end position="736"/>
    </location>
</feature>
<feature type="helix" evidence="26">
    <location>
        <begin position="737"/>
        <end position="739"/>
    </location>
</feature>
<feature type="strand" evidence="26">
    <location>
        <begin position="742"/>
        <end position="744"/>
    </location>
</feature>
<feature type="strand" evidence="26">
    <location>
        <begin position="760"/>
        <end position="763"/>
    </location>
</feature>
<feature type="strand" evidence="27">
    <location>
        <begin position="769"/>
        <end position="771"/>
    </location>
</feature>
<feature type="helix" evidence="26">
    <location>
        <begin position="782"/>
        <end position="800"/>
    </location>
</feature>
<feature type="strand" evidence="25">
    <location>
        <begin position="803"/>
        <end position="809"/>
    </location>
</feature>
<feature type="strand" evidence="26">
    <location>
        <begin position="813"/>
        <end position="820"/>
    </location>
</feature>
<feature type="helix" evidence="26">
    <location>
        <begin position="829"/>
        <end position="850"/>
    </location>
</feature>
<feature type="turn" evidence="26">
    <location>
        <begin position="857"/>
        <end position="859"/>
    </location>
</feature>
<feature type="strand" evidence="26">
    <location>
        <begin position="861"/>
        <end position="865"/>
    </location>
</feature>
<feature type="turn" evidence="26">
    <location>
        <begin position="867"/>
        <end position="870"/>
    </location>
</feature>
<feature type="strand" evidence="26">
    <location>
        <begin position="873"/>
        <end position="875"/>
    </location>
</feature>
<feature type="strand" evidence="26">
    <location>
        <begin position="878"/>
        <end position="880"/>
    </location>
</feature>
<feature type="helix" evidence="26">
    <location>
        <begin position="883"/>
        <end position="886"/>
    </location>
</feature>
<feature type="turn" evidence="26">
    <location>
        <begin position="887"/>
        <end position="889"/>
    </location>
</feature>
<feature type="turn" evidence="26">
    <location>
        <begin position="892"/>
        <end position="895"/>
    </location>
</feature>
<feature type="helix" evidence="26">
    <location>
        <begin position="901"/>
        <end position="912"/>
    </location>
</feature>
<feature type="helix" evidence="26">
    <location>
        <begin position="914"/>
        <end position="917"/>
    </location>
</feature>
<feature type="helix" evidence="26">
    <location>
        <begin position="922"/>
        <end position="938"/>
    </location>
</feature>
<feature type="helix" evidence="26">
    <location>
        <begin position="941"/>
        <end position="943"/>
    </location>
</feature>
<feature type="strand" evidence="26">
    <location>
        <begin position="945"/>
        <end position="947"/>
    </location>
</feature>
<feature type="helix" evidence="26">
    <location>
        <begin position="950"/>
        <end position="965"/>
    </location>
</feature>
<feature type="helix" evidence="26">
    <location>
        <begin position="973"/>
        <end position="978"/>
    </location>
</feature>
<feature type="helix" evidence="26">
    <location>
        <begin position="983"/>
        <end position="985"/>
    </location>
</feature>
<feature type="strand" evidence="26">
    <location>
        <begin position="988"/>
        <end position="991"/>
    </location>
</feature>
<feature type="helix" evidence="26">
    <location>
        <begin position="993"/>
        <end position="996"/>
    </location>
</feature>
<feature type="helix" evidence="26">
    <location>
        <begin position="1004"/>
        <end position="1020"/>
    </location>
</feature>
<feature type="strand" evidence="26">
    <location>
        <begin position="1024"/>
        <end position="1026"/>
    </location>
</feature>
<feature type="helix" evidence="26">
    <location>
        <begin position="1035"/>
        <end position="1044"/>
    </location>
</feature>
<feature type="helix" evidence="26">
    <location>
        <begin position="1053"/>
        <end position="1059"/>
    </location>
</feature>
<feature type="helix" evidence="26">
    <location>
        <begin position="1073"/>
        <end position="1085"/>
    </location>
</feature>
<feature type="helix" evidence="26">
    <location>
        <begin position="1091"/>
        <end position="1098"/>
    </location>
</feature>
<feature type="helix" evidence="26">
    <location>
        <begin position="1100"/>
        <end position="1106"/>
    </location>
</feature>
<feature type="turn" evidence="26">
    <location>
        <begin position="1107"/>
        <end position="1113"/>
    </location>
</feature>
<feature type="strand" evidence="26">
    <location>
        <begin position="1115"/>
        <end position="1117"/>
    </location>
</feature>
<feature type="helix" evidence="26">
    <location>
        <begin position="1119"/>
        <end position="1127"/>
    </location>
</feature>
<feature type="helix" evidence="26">
    <location>
        <begin position="1131"/>
        <end position="1141"/>
    </location>
</feature>
<feature type="strand" evidence="25">
    <location>
        <begin position="1144"/>
        <end position="1146"/>
    </location>
</feature>
<feature type="turn" evidence="26">
    <location>
        <begin position="1148"/>
        <end position="1152"/>
    </location>
</feature>
<feature type="strand" evidence="27">
    <location>
        <begin position="1156"/>
        <end position="1158"/>
    </location>
</feature>
<feature type="helix" evidence="26">
    <location>
        <begin position="1159"/>
        <end position="1179"/>
    </location>
</feature>
<feature type="helix" evidence="26">
    <location>
        <begin position="1184"/>
        <end position="1187"/>
    </location>
</feature>
<feature type="helix" evidence="26">
    <location>
        <begin position="1199"/>
        <end position="1211"/>
    </location>
</feature>
<feature type="helix" evidence="26">
    <location>
        <begin position="1224"/>
        <end position="1227"/>
    </location>
</feature>
<feature type="strand" evidence="26">
    <location>
        <begin position="1228"/>
        <end position="1233"/>
    </location>
</feature>
<feature type="strand" evidence="26">
    <location>
        <begin position="1240"/>
        <end position="1245"/>
    </location>
</feature>
<feature type="strand" evidence="26">
    <location>
        <begin position="1247"/>
        <end position="1250"/>
    </location>
</feature>
<feature type="helix" evidence="26">
    <location>
        <begin position="1278"/>
        <end position="1280"/>
    </location>
</feature>
<feature type="helix" evidence="26">
    <location>
        <begin position="1283"/>
        <end position="1298"/>
    </location>
</feature>
<feature type="turn" evidence="26">
    <location>
        <begin position="1299"/>
        <end position="1301"/>
    </location>
</feature>
<feature type="helix" evidence="26">
    <location>
        <begin position="1305"/>
        <end position="1316"/>
    </location>
</feature>
<feature type="strand" evidence="27">
    <location>
        <begin position="1317"/>
        <end position="1319"/>
    </location>
</feature>
<feature type="strand" evidence="26">
    <location>
        <begin position="1321"/>
        <end position="1324"/>
    </location>
</feature>
<feature type="turn" evidence="26">
    <location>
        <begin position="1325"/>
        <end position="1327"/>
    </location>
</feature>
<feature type="helix" evidence="26">
    <location>
        <begin position="1336"/>
        <end position="1339"/>
    </location>
</feature>
<feature type="strand" evidence="26">
    <location>
        <begin position="1351"/>
        <end position="1353"/>
    </location>
</feature>
<feature type="helix" evidence="26">
    <location>
        <begin position="1355"/>
        <end position="1358"/>
    </location>
</feature>
<feature type="strand" evidence="26">
    <location>
        <begin position="1361"/>
        <end position="1364"/>
    </location>
</feature>
<feature type="helix" evidence="26">
    <location>
        <begin position="1366"/>
        <end position="1376"/>
    </location>
</feature>
<feature type="strand" evidence="26">
    <location>
        <begin position="1381"/>
        <end position="1383"/>
    </location>
</feature>
<feature type="helix" evidence="26">
    <location>
        <begin position="1385"/>
        <end position="1403"/>
    </location>
</feature>
<feature type="strand" evidence="26">
    <location>
        <begin position="1408"/>
        <end position="1414"/>
    </location>
</feature>
<feature type="helix" evidence="26">
    <location>
        <begin position="1416"/>
        <end position="1418"/>
    </location>
</feature>
<feature type="helix" evidence="26">
    <location>
        <begin position="1433"/>
        <end position="1442"/>
    </location>
</feature>
<feature type="helix" evidence="26">
    <location>
        <begin position="1444"/>
        <end position="1446"/>
    </location>
</feature>
<feature type="helix" evidence="26">
    <location>
        <begin position="1453"/>
        <end position="1456"/>
    </location>
</feature>
<feature type="turn" evidence="26">
    <location>
        <begin position="1457"/>
        <end position="1459"/>
    </location>
</feature>
<dbReference type="EC" id="2.7.7.48" evidence="8 13"/>
<dbReference type="EC" id="3.6.1.-" evidence="18"/>
<dbReference type="EC" id="2.7.7.88" evidence="6 18"/>
<dbReference type="EC" id="2.1.1.375" evidence="1"/>
<dbReference type="EMBL" id="M75730">
    <property type="protein sequence ID" value="AAA47418.1"/>
    <property type="molecule type" value="Genomic_RNA"/>
</dbReference>
<dbReference type="EMBL" id="U27298">
    <property type="protein sequence ID" value="AAA84898.1"/>
    <property type="molecule type" value="Genomic_RNA"/>
</dbReference>
<dbReference type="EMBL" id="U50362">
    <property type="protein sequence ID" value="AAB86667.1"/>
    <property type="molecule type" value="Genomic_RNA"/>
</dbReference>
<dbReference type="EMBL" id="U50363">
    <property type="protein sequence ID" value="AAB86679.1"/>
    <property type="molecule type" value="Genomic_RNA"/>
</dbReference>
<dbReference type="EMBL" id="U63644">
    <property type="protein sequence ID" value="AAC55973.1"/>
    <property type="molecule type" value="Genomic_RNA"/>
</dbReference>
<dbReference type="EMBL" id="AF035006">
    <property type="protein sequence ID" value="AAC14905.1"/>
    <property type="molecule type" value="Genomic_RNA"/>
</dbReference>
<dbReference type="PIR" id="A40317">
    <property type="entry name" value="RRNZA2"/>
</dbReference>
<dbReference type="PDB" id="6PZK">
    <property type="method" value="EM"/>
    <property type="resolution" value="3.20 A"/>
    <property type="chains" value="A=1-2165"/>
</dbReference>
<dbReference type="PDB" id="6UEN">
    <property type="method" value="EM"/>
    <property type="resolution" value="3.67 A"/>
    <property type="chains" value="A=1-1500"/>
</dbReference>
<dbReference type="PDB" id="8FPI">
    <property type="method" value="EM"/>
    <property type="resolution" value="2.39 A"/>
    <property type="chains" value="A=1-1460"/>
</dbReference>
<dbReference type="PDB" id="8FU3">
    <property type="method" value="EM"/>
    <property type="resolution" value="2.88 A"/>
    <property type="chains" value="A=1-2165"/>
</dbReference>
<dbReference type="PDB" id="8SNX">
    <property type="method" value="EM"/>
    <property type="resolution" value="3.40 A"/>
    <property type="chains" value="A=1-2165"/>
</dbReference>
<dbReference type="PDB" id="8SNY">
    <property type="method" value="EM"/>
    <property type="resolution" value="3.41 A"/>
    <property type="chains" value="A=1-2165"/>
</dbReference>
<dbReference type="PDB" id="9C7Y">
    <property type="method" value="EM"/>
    <property type="resolution" value="3.24 A"/>
    <property type="chains" value="A=1-2165"/>
</dbReference>
<dbReference type="PDBsum" id="6PZK"/>
<dbReference type="PDBsum" id="6UEN"/>
<dbReference type="PDBsum" id="8FPI"/>
<dbReference type="PDBsum" id="8FU3"/>
<dbReference type="PDBsum" id="8SNX"/>
<dbReference type="PDBsum" id="8SNY"/>
<dbReference type="PDBsum" id="9C7Y"/>
<dbReference type="EMDB" id="EMD-20536"/>
<dbReference type="EMDB" id="EMD-29365"/>
<dbReference type="EMDB" id="EMD-29452"/>
<dbReference type="EMDB" id="EMD-40641"/>
<dbReference type="EMDB" id="EMD-40642"/>
<dbReference type="EMDB" id="EMD-45296"/>
<dbReference type="SMR" id="P28887"/>
<dbReference type="IntAct" id="P28887">
    <property type="interactions" value="18"/>
</dbReference>
<dbReference type="BindingDB" id="P28887"/>
<dbReference type="ChEMBL" id="CHEMBL4630897"/>
<dbReference type="BRENDA" id="2.7.7.48">
    <property type="organism ID" value="17394"/>
</dbReference>
<dbReference type="Reactome" id="R-HSA-9820960">
    <property type="pathway name" value="Respiratory syncytial virus (RSV) attachment and entry"/>
</dbReference>
<dbReference type="Reactome" id="R-HSA-9820962">
    <property type="pathway name" value="Assembly and release of respiratory syncytial virus (RSV) virions"/>
</dbReference>
<dbReference type="Reactome" id="R-HSA-9828642">
    <property type="pathway name" value="Respiratory syncytial virus genome transcription"/>
</dbReference>
<dbReference type="Reactome" id="R-HSA-9828721">
    <property type="pathway name" value="Translation of respiratory syncytial virus mRNAs"/>
</dbReference>
<dbReference type="Reactome" id="R-HSA-9828806">
    <property type="pathway name" value="Maturation of hRSV A proteins"/>
</dbReference>
<dbReference type="Reactome" id="R-HSA-9833110">
    <property type="pathway name" value="RSV-host interactions"/>
</dbReference>
<dbReference type="Reactome" id="R-HSA-9834752">
    <property type="pathway name" value="Respiratory syncytial virus genome replication"/>
</dbReference>
<dbReference type="Proteomes" id="UP000134464">
    <property type="component" value="Genome"/>
</dbReference>
<dbReference type="Proteomes" id="UP000181145">
    <property type="component" value="Genome"/>
</dbReference>
<dbReference type="Proteomes" id="UP000181262">
    <property type="component" value="Genome"/>
</dbReference>
<dbReference type="Proteomes" id="UP000181559">
    <property type="component" value="Genome"/>
</dbReference>
<dbReference type="GO" id="GO:0030430">
    <property type="term" value="C:host cell cytoplasm"/>
    <property type="evidence" value="ECO:0007669"/>
    <property type="project" value="UniProtKB-SubCell"/>
</dbReference>
<dbReference type="GO" id="GO:0044423">
    <property type="term" value="C:virion component"/>
    <property type="evidence" value="ECO:0007669"/>
    <property type="project" value="UniProtKB-KW"/>
</dbReference>
<dbReference type="GO" id="GO:0005524">
    <property type="term" value="F:ATP binding"/>
    <property type="evidence" value="ECO:0007669"/>
    <property type="project" value="UniProtKB-KW"/>
</dbReference>
<dbReference type="GO" id="GO:0003924">
    <property type="term" value="F:GTPase activity"/>
    <property type="evidence" value="ECO:0007669"/>
    <property type="project" value="RHEA"/>
</dbReference>
<dbReference type="GO" id="GO:0046872">
    <property type="term" value="F:metal ion binding"/>
    <property type="evidence" value="ECO:0007669"/>
    <property type="project" value="UniProtKB-KW"/>
</dbReference>
<dbReference type="GO" id="GO:0004482">
    <property type="term" value="F:mRNA 5'-cap (guanine-N7-)-methyltransferase activity"/>
    <property type="evidence" value="ECO:0007669"/>
    <property type="project" value="InterPro"/>
</dbReference>
<dbReference type="GO" id="GO:0003968">
    <property type="term" value="F:RNA-directed RNA polymerase activity"/>
    <property type="evidence" value="ECO:0007669"/>
    <property type="project" value="UniProtKB-KW"/>
</dbReference>
<dbReference type="GO" id="GO:0039689">
    <property type="term" value="P:negative stranded viral RNA replication"/>
    <property type="evidence" value="ECO:0000314"/>
    <property type="project" value="UniProtKB"/>
</dbReference>
<dbReference type="InterPro" id="IPR039530">
    <property type="entry name" value="L_methyltransferase_rhabdo"/>
</dbReference>
<dbReference type="InterPro" id="IPR039736">
    <property type="entry name" value="L_poly_C"/>
</dbReference>
<dbReference type="InterPro" id="IPR026890">
    <property type="entry name" value="Mononeg_mRNAcap"/>
</dbReference>
<dbReference type="InterPro" id="IPR014023">
    <property type="entry name" value="Mononeg_RNA_pol_cat"/>
</dbReference>
<dbReference type="InterPro" id="IPR025786">
    <property type="entry name" value="Mononega_L_MeTrfase"/>
</dbReference>
<dbReference type="InterPro" id="IPR016269">
    <property type="entry name" value="RNA-dir_pol_paramyxovirus"/>
</dbReference>
<dbReference type="NCBIfam" id="TIGR04198">
    <property type="entry name" value="paramyx_RNAcap"/>
    <property type="match status" value="1"/>
</dbReference>
<dbReference type="Pfam" id="PF14314">
    <property type="entry name" value="Methyltrans_Mon_2nd"/>
    <property type="match status" value="1"/>
</dbReference>
<dbReference type="Pfam" id="PF14318">
    <property type="entry name" value="Mononeg_mRNAcap"/>
    <property type="match status" value="1"/>
</dbReference>
<dbReference type="Pfam" id="PF00946">
    <property type="entry name" value="Mononeg_RNA_pol"/>
    <property type="match status" value="1"/>
</dbReference>
<dbReference type="PIRSF" id="PIRSF000830">
    <property type="entry name" value="RNA_pol_ParamyxoV"/>
    <property type="match status" value="1"/>
</dbReference>
<dbReference type="PROSITE" id="PS50526">
    <property type="entry name" value="RDRP_SSRNA_NEG_NONSEG"/>
    <property type="match status" value="1"/>
</dbReference>
<dbReference type="PROSITE" id="PS51590">
    <property type="entry name" value="SAM_MT_MNV_L"/>
    <property type="match status" value="1"/>
</dbReference>
<gene>
    <name type="primary">L</name>
</gene>